<gene>
    <name type="primary">kgd</name>
    <name type="ordered locus">MT1286</name>
</gene>
<name>KGD_MYCTO</name>
<accession>P9WIS4</accession>
<accession>L0T8T9</accession>
<accession>O50463</accession>
<accession>Q7D8I9</accession>
<feature type="chain" id="PRO_0000427954" description="Multifunctional 2-oxoglutarate metabolism enzyme">
    <location>
        <begin position="1"/>
        <end position="1231"/>
    </location>
</feature>
<feature type="region of interest" description="2-oxoglutarate dehydrogenase E1, N-terminal part" evidence="1">
    <location>
        <begin position="1"/>
        <end position="41"/>
    </location>
</feature>
<feature type="region of interest" description="Disordered" evidence="4">
    <location>
        <begin position="38"/>
        <end position="79"/>
    </location>
</feature>
<feature type="region of interest" description="Linker" evidence="1">
    <location>
        <begin position="42"/>
        <end position="88"/>
    </location>
</feature>
<feature type="region of interest" description="Succinyltransferase E2" evidence="1">
    <location>
        <begin position="89"/>
        <end position="337"/>
    </location>
</feature>
<feature type="region of interest" description="2-oxoglutarate dehydrogenase E1, C-terminal part" evidence="1">
    <location>
        <begin position="338"/>
        <end position="1231"/>
    </location>
</feature>
<feature type="coiled-coil region" evidence="3">
    <location>
        <begin position="787"/>
        <end position="817"/>
    </location>
</feature>
<feature type="compositionally biased region" description="Low complexity" evidence="4">
    <location>
        <begin position="58"/>
        <end position="69"/>
    </location>
</feature>
<feature type="active site" description="Proton acceptor; for succinyltransferase activity" evidence="1">
    <location>
        <position position="316"/>
    </location>
</feature>
<feature type="binding site" evidence="2">
    <location>
        <position position="542"/>
    </location>
    <ligand>
        <name>thiamine diphosphate</name>
        <dbReference type="ChEBI" id="CHEBI:58937"/>
    </ligand>
</feature>
<feature type="binding site" evidence="2">
    <location>
        <position position="581"/>
    </location>
    <ligand>
        <name>2-oxoglutarate</name>
        <dbReference type="ChEBI" id="CHEBI:16810"/>
    </ligand>
</feature>
<feature type="binding site" evidence="2">
    <location>
        <position position="606"/>
    </location>
    <ligand>
        <name>2-oxoglutarate</name>
        <dbReference type="ChEBI" id="CHEBI:16810"/>
    </ligand>
</feature>
<feature type="binding site" evidence="2">
    <location>
        <position position="606"/>
    </location>
    <ligand>
        <name>thiamine diphosphate</name>
        <dbReference type="ChEBI" id="CHEBI:58937"/>
    </ligand>
</feature>
<feature type="binding site" evidence="2">
    <location>
        <position position="608"/>
    </location>
    <ligand>
        <name>thiamine diphosphate</name>
        <dbReference type="ChEBI" id="CHEBI:58937"/>
    </ligand>
</feature>
<feature type="binding site" evidence="2">
    <location>
        <position position="649"/>
    </location>
    <ligand>
        <name>Mg(2+)</name>
        <dbReference type="ChEBI" id="CHEBI:18420"/>
    </ligand>
</feature>
<feature type="binding site" evidence="2">
    <location>
        <position position="649"/>
    </location>
    <ligand>
        <name>thiamine diphosphate</name>
        <dbReference type="ChEBI" id="CHEBI:58937"/>
    </ligand>
</feature>
<feature type="binding site" evidence="2">
    <location>
        <position position="650"/>
    </location>
    <ligand>
        <name>thiamine diphosphate</name>
        <dbReference type="ChEBI" id="CHEBI:58937"/>
    </ligand>
</feature>
<feature type="binding site" evidence="2">
    <location>
        <position position="651"/>
    </location>
    <ligand>
        <name>thiamine diphosphate</name>
        <dbReference type="ChEBI" id="CHEBI:58937"/>
    </ligand>
</feature>
<feature type="binding site" evidence="2">
    <location>
        <position position="682"/>
    </location>
    <ligand>
        <name>Mg(2+)</name>
        <dbReference type="ChEBI" id="CHEBI:18420"/>
    </ligand>
</feature>
<feature type="binding site" evidence="2">
    <location>
        <position position="682"/>
    </location>
    <ligand>
        <name>thiamine diphosphate</name>
        <dbReference type="ChEBI" id="CHEBI:58937"/>
    </ligand>
</feature>
<feature type="binding site" evidence="2">
    <location>
        <position position="684"/>
    </location>
    <ligand>
        <name>Mg(2+)</name>
        <dbReference type="ChEBI" id="CHEBI:18420"/>
    </ligand>
</feature>
<feature type="binding site" evidence="2">
    <location>
        <position position="1024"/>
    </location>
    <ligand>
        <name>2-oxoglutarate</name>
        <dbReference type="ChEBI" id="CHEBI:16810"/>
    </ligand>
</feature>
<feature type="binding site" evidence="2">
    <location>
        <position position="1042"/>
    </location>
    <ligand>
        <name>acetyl-CoA</name>
        <dbReference type="ChEBI" id="CHEBI:57288"/>
        <note>allosteric activator</note>
    </ligand>
</feature>
<feature type="binding site" evidence="2">
    <location>
        <position position="1058"/>
    </location>
    <ligand>
        <name>acetyl-CoA</name>
        <dbReference type="ChEBI" id="CHEBI:57288"/>
        <note>allosteric activator</note>
    </ligand>
</feature>
<feature type="binding site" evidence="2">
    <location>
        <position position="1093"/>
    </location>
    <ligand>
        <name>acetyl-CoA</name>
        <dbReference type="ChEBI" id="CHEBI:57288"/>
        <note>allosteric activator</note>
    </ligand>
</feature>
<feature type="binding site" evidence="2">
    <location>
        <position position="1096"/>
    </location>
    <ligand>
        <name>acetyl-CoA</name>
        <dbReference type="ChEBI" id="CHEBI:57288"/>
        <note>allosteric activator</note>
    </ligand>
</feature>
<feature type="binding site" evidence="2">
    <location>
        <position position="1146"/>
    </location>
    <ligand>
        <name>acetyl-CoA</name>
        <dbReference type="ChEBI" id="CHEBI:57288"/>
        <note>allosteric activator</note>
    </ligand>
</feature>
<feature type="binding site" evidence="2">
    <location>
        <position position="1153"/>
    </location>
    <ligand>
        <name>acetyl-CoA</name>
        <dbReference type="ChEBI" id="CHEBI:57288"/>
        <note>allosteric activator</note>
    </ligand>
</feature>
<feature type="binding site" evidence="2">
    <location>
        <position position="1154"/>
    </location>
    <ligand>
        <name>acetyl-CoA</name>
        <dbReference type="ChEBI" id="CHEBI:57288"/>
        <note>allosteric activator</note>
    </ligand>
</feature>
<comment type="function">
    <text evidence="1">Shows three enzymatic activities that share a first common step, the attack of thiamine-PP on 2-oxoglutarate (alpha-ketoglutarate, KG), leading to the formation of an enamine-thiamine-PP intermediate upon decarboxylation. Thus, displays KGD activity, catalyzing the decarboxylation from five-carbon 2-oxoglutarate to four-carbon succinate semialdehyde (SSA). Also catalyzes C-C bond formation between the activated aldehyde formed after decarboxylation of alpha-ketoglutarate and the carbonyl of glyoxylate (GLX), to yield 2-hydroxy-3-oxoadipate (HOA), which spontaneously decarboxylates to form 5-hydroxylevulinate (HLA). And is also a component of the 2-oxoglutarate dehydrogenase (ODH) complex, that catalyzes the overall conversion of 2-oxoglutarate to succinyl-CoA and CO(2). The KG decarboxylase and KG dehydrogenase reactions provide two alternative, tightly regulated, pathways connecting the oxidative and reductive branches of the TCA cycle, which can endow M.tuberculosis with the metabolic plasticity required for growth on diverse host-derived carbon sources. Appears to play a predominant role in growth on carbohydrates as the sole carbon source, and only a minimal role during growth on fatty acids (By similarity).</text>
</comment>
<comment type="catalytic activity">
    <reaction>
        <text>glyoxylate + 2-oxoglutarate + H(+) = 2-hydroxy-3-oxoadipate + CO2</text>
        <dbReference type="Rhea" id="RHEA:14341"/>
        <dbReference type="ChEBI" id="CHEBI:15378"/>
        <dbReference type="ChEBI" id="CHEBI:16526"/>
        <dbReference type="ChEBI" id="CHEBI:16810"/>
        <dbReference type="ChEBI" id="CHEBI:36655"/>
        <dbReference type="ChEBI" id="CHEBI:57712"/>
        <dbReference type="EC" id="2.2.1.5"/>
    </reaction>
</comment>
<comment type="catalytic activity">
    <reaction>
        <text>2-oxoglutarate + H(+) = succinate semialdehyde + CO2</text>
        <dbReference type="Rhea" id="RHEA:10524"/>
        <dbReference type="ChEBI" id="CHEBI:15378"/>
        <dbReference type="ChEBI" id="CHEBI:16526"/>
        <dbReference type="ChEBI" id="CHEBI:16810"/>
        <dbReference type="ChEBI" id="CHEBI:57706"/>
        <dbReference type="EC" id="4.1.1.71"/>
    </reaction>
</comment>
<comment type="catalytic activity">
    <reaction>
        <text>N(6)-[(R)-lipoyl]-L-lysyl-[protein] + 2-oxoglutarate + H(+) = N(6)-[(R)-S(8)-succinyldihydrolipoyl]-L-lysyl-[protein] + CO2</text>
        <dbReference type="Rhea" id="RHEA:12188"/>
        <dbReference type="Rhea" id="RHEA-COMP:10474"/>
        <dbReference type="Rhea" id="RHEA-COMP:20092"/>
        <dbReference type="ChEBI" id="CHEBI:15378"/>
        <dbReference type="ChEBI" id="CHEBI:16526"/>
        <dbReference type="ChEBI" id="CHEBI:16810"/>
        <dbReference type="ChEBI" id="CHEBI:83099"/>
        <dbReference type="ChEBI" id="CHEBI:83120"/>
        <dbReference type="EC" id="1.2.4.2"/>
    </reaction>
</comment>
<comment type="catalytic activity">
    <reaction>
        <text>N(6)-[(R)-dihydrolipoyl]-L-lysyl-[protein] + succinyl-CoA = N(6)-[(R)-S(8)-succinyldihydrolipoyl]-L-lysyl-[protein] + CoA</text>
        <dbReference type="Rhea" id="RHEA:15213"/>
        <dbReference type="Rhea" id="RHEA-COMP:10475"/>
        <dbReference type="Rhea" id="RHEA-COMP:20092"/>
        <dbReference type="ChEBI" id="CHEBI:57287"/>
        <dbReference type="ChEBI" id="CHEBI:57292"/>
        <dbReference type="ChEBI" id="CHEBI:83100"/>
        <dbReference type="ChEBI" id="CHEBI:83120"/>
        <dbReference type="EC" id="2.3.1.61"/>
    </reaction>
</comment>
<comment type="cofactor">
    <cofactor evidence="1">
        <name>Mg(2+)</name>
        <dbReference type="ChEBI" id="CHEBI:18420"/>
    </cofactor>
</comment>
<comment type="cofactor">
    <cofactor evidence="1">
        <name>thiamine diphosphate</name>
        <dbReference type="ChEBI" id="CHEBI:58937"/>
    </cofactor>
</comment>
<comment type="pathway">
    <text>Carbohydrate metabolism; tricarboxylic acid cycle; succinate from 2-oxoglutarate (transferase route): step 1/2.</text>
</comment>
<comment type="pathway">
    <text>Carbohydrate metabolism; tricarboxylic acid cycle; succinyl-CoA from 2-oxoglutarate (dehydrogenase route): step 1/1.</text>
</comment>
<comment type="subunit">
    <text evidence="1">Homodimer. The 2-oxoglutarate dehydrogenase (ODH) complex contains multiple copies of three enzymatic components: 2-oxoglutarate dehydrogenase (E1), dihydrolipoamide succinyltransferase (E2) and lipoamide dehydrogenase (E3).</text>
</comment>
<comment type="domain">
    <text evidence="1">Is a fusion protein with two major domains exhibiting structural features of an E1 and E2 protein, and a short sequence stretch of E1 localized at the N-terminus, which is connected by a linker region to the rest of the protein.</text>
</comment>
<comment type="similarity">
    <text evidence="5">Belongs to the 2-oxoacid dehydrogenase family. Kgd subfamily.</text>
</comment>
<sequence>MANISSPFGQNEWLVEEMYRKFRDDPSSVDPSWHEFLVDYSPEPTSQPAAEPTRVTSPLVAERAAAAAPQAPPKPADTAAAGNGVVAALAAKTAVPPPAEGDEVAVLRGAAAAVVKNMSASLEVPTATSVRAVPAKLLIDNRIVINNQLKRTRGGKISFTHLLGYALVQAVKKFPNMNRHYTEVDGKPTAVTPAHTNLGLAIDLQGKDGKRSLVVAGIKRCETMRFAQFVTAYEDIVRRARDGKLTTEDFAGVTISLTNPGTIGTVHSVPRLMPGQGAIIGVGAMEYPAEFQGASEERIAELGIGKLITLTSTYDHRIIQGAESGDFLRTIHELLLSDGFWDEVFRELSIPYLPVRWSTDNPDSIVDKNARVMNLIAAYRNRGHLMADTDPLRLDKARFRSHPDLEVLTHGLTLWDLDRVFKVDGFAGAQYKKLRDVLGLLRDAYCRHIGVEYAHILDPEQKEWLEQRVETKHVKPTVAQQKYILSKLNAAEAFETFLQTKYVGQKRFSLEGAESVIPMMDAAIDQCAEHGLDEVVIGMPHRGRLNVLANIVGKPYSQIFTEFEGNLNPSQAHGSGDVKYHLGATGLYLQMFGDNDIQVSLTANPSHLEAVDPVLEGLVRAKQDLLDHGSIDSDGQRAFSVVPLMLHGDAAFAGQGVVAETLNLANLPGYRVGGTIHIIVNNQIGFTTAPEYSRSSEYCTDVAKMIGAPIFHVNGDDPEACVWVARLAVDFRQRFKKDVVIDMLCYRRRGHNEGDDPSMTNPYVYDVVDTKRGARKSYTEALIGRGDISMKEAEDALRDYQGQLERVFNEVRELEKHGVQPSESVESDQMIPAGLATAVDKSLLARIGDAFLALPNGFTAHPRVQPVLEKRREMAYEGKIDWAFGELLALGSLVAEGKLVRLSGQDSRRGTFSQRHSVLIDRHTGEEFTPLQLLATNSDGSPTGGKFLVYDSPLSEYAAVGFEYGYTVGNPDAVVLWEAQFGDFVNGAQSIIDEFISSGEAKWGQLSNVVLLLPHGHEGQGPDHTSARIERFLQLWAEGSMTIAMPSTPSNYFHLLRRHALDGIQRPLIVFTPKSMLRHKAAVSEIKDFTEIKFRSVLEEPTYEDGIGDRNKVSRILLTSGKLYYELAARKAKDNRNDLAIVRLEQLAPLPRRRLRETLDRYENVKEFFWVQEEPANQGAWPRFGLELPELLPDKLAGIKRISRRAMSAPSSGSSKVHAVEQQEILDEAFG</sequence>
<proteinExistence type="inferred from homology"/>
<reference key="1">
    <citation type="journal article" date="2002" name="J. Bacteriol.">
        <title>Whole-genome comparison of Mycobacterium tuberculosis clinical and laboratory strains.</title>
        <authorList>
            <person name="Fleischmann R.D."/>
            <person name="Alland D."/>
            <person name="Eisen J.A."/>
            <person name="Carpenter L."/>
            <person name="White O."/>
            <person name="Peterson J.D."/>
            <person name="DeBoy R.T."/>
            <person name="Dodson R.J."/>
            <person name="Gwinn M.L."/>
            <person name="Haft D.H."/>
            <person name="Hickey E.K."/>
            <person name="Kolonay J.F."/>
            <person name="Nelson W.C."/>
            <person name="Umayam L.A."/>
            <person name="Ermolaeva M.D."/>
            <person name="Salzberg S.L."/>
            <person name="Delcher A."/>
            <person name="Utterback T.R."/>
            <person name="Weidman J.F."/>
            <person name="Khouri H.M."/>
            <person name="Gill J."/>
            <person name="Mikula A."/>
            <person name="Bishai W."/>
            <person name="Jacobs W.R. Jr."/>
            <person name="Venter J.C."/>
            <person name="Fraser C.M."/>
        </authorList>
    </citation>
    <scope>NUCLEOTIDE SEQUENCE [LARGE SCALE GENOMIC DNA]</scope>
    <source>
        <strain>CDC 1551 / Oshkosh</strain>
    </source>
</reference>
<evidence type="ECO:0000250" key="1"/>
<evidence type="ECO:0000250" key="2">
    <source>
        <dbReference type="UniProtKB" id="A0R2B1"/>
    </source>
</evidence>
<evidence type="ECO:0000255" key="3"/>
<evidence type="ECO:0000256" key="4">
    <source>
        <dbReference type="SAM" id="MobiDB-lite"/>
    </source>
</evidence>
<evidence type="ECO:0000305" key="5"/>
<dbReference type="EC" id="2.2.1.5"/>
<dbReference type="EC" id="4.1.1.71"/>
<dbReference type="EC" id="1.2.4.2"/>
<dbReference type="EC" id="2.3.1.61"/>
<dbReference type="EMBL" id="AE000516">
    <property type="protein sequence ID" value="AAK45544.1"/>
    <property type="molecule type" value="Genomic_DNA"/>
</dbReference>
<dbReference type="PIR" id="G70953">
    <property type="entry name" value="G70953"/>
</dbReference>
<dbReference type="RefSeq" id="WP_003898790.1">
    <property type="nucleotide sequence ID" value="NZ_KK341227.1"/>
</dbReference>
<dbReference type="SMR" id="P9WIS4"/>
<dbReference type="KEGG" id="mtc:MT1286"/>
<dbReference type="PATRIC" id="fig|83331.31.peg.1389"/>
<dbReference type="HOGENOM" id="CLU_004709_1_0_11"/>
<dbReference type="UniPathway" id="UPA00223">
    <property type="reaction ID" value="UER00997"/>
</dbReference>
<dbReference type="UniPathway" id="UPA00223">
    <property type="reaction ID" value="UER01001"/>
</dbReference>
<dbReference type="Proteomes" id="UP000001020">
    <property type="component" value="Chromosome"/>
</dbReference>
<dbReference type="GO" id="GO:0005829">
    <property type="term" value="C:cytosol"/>
    <property type="evidence" value="ECO:0007669"/>
    <property type="project" value="TreeGrafter"/>
</dbReference>
<dbReference type="GO" id="GO:0045252">
    <property type="term" value="C:oxoglutarate dehydrogenase complex"/>
    <property type="evidence" value="ECO:0007669"/>
    <property type="project" value="TreeGrafter"/>
</dbReference>
<dbReference type="GO" id="GO:0050439">
    <property type="term" value="F:2-hydroxy-3-oxoadipate synthase activity"/>
    <property type="evidence" value="ECO:0007669"/>
    <property type="project" value="UniProtKB-EC"/>
</dbReference>
<dbReference type="GO" id="GO:0008683">
    <property type="term" value="F:2-oxoglutarate decarboxylase activity"/>
    <property type="evidence" value="ECO:0007669"/>
    <property type="project" value="UniProtKB-EC"/>
</dbReference>
<dbReference type="GO" id="GO:0004149">
    <property type="term" value="F:dihydrolipoyllysine-residue succinyltransferase activity"/>
    <property type="evidence" value="ECO:0007669"/>
    <property type="project" value="UniProtKB-EC"/>
</dbReference>
<dbReference type="GO" id="GO:0000287">
    <property type="term" value="F:magnesium ion binding"/>
    <property type="evidence" value="ECO:0007669"/>
    <property type="project" value="UniProtKB-ARBA"/>
</dbReference>
<dbReference type="GO" id="GO:0004591">
    <property type="term" value="F:oxoglutarate dehydrogenase (succinyl-transferring) activity"/>
    <property type="evidence" value="ECO:0007669"/>
    <property type="project" value="UniProtKB-EC"/>
</dbReference>
<dbReference type="GO" id="GO:0030976">
    <property type="term" value="F:thiamine pyrophosphate binding"/>
    <property type="evidence" value="ECO:0007669"/>
    <property type="project" value="InterPro"/>
</dbReference>
<dbReference type="GO" id="GO:0006099">
    <property type="term" value="P:tricarboxylic acid cycle"/>
    <property type="evidence" value="ECO:0007669"/>
    <property type="project" value="UniProtKB-UniPathway"/>
</dbReference>
<dbReference type="CDD" id="cd02016">
    <property type="entry name" value="TPP_E1_OGDC_like"/>
    <property type="match status" value="1"/>
</dbReference>
<dbReference type="FunFam" id="3.30.559.10:FF:000011">
    <property type="entry name" value="2-oxoglutarate dehydrogenase E1 component"/>
    <property type="match status" value="1"/>
</dbReference>
<dbReference type="FunFam" id="3.40.50.11610:FF:000002">
    <property type="entry name" value="2-oxoglutarate dehydrogenase E1 component"/>
    <property type="match status" value="1"/>
</dbReference>
<dbReference type="FunFam" id="3.40.50.970:FF:000018">
    <property type="entry name" value="2-oxoglutarate dehydrogenase E1 component"/>
    <property type="match status" value="1"/>
</dbReference>
<dbReference type="Gene3D" id="3.40.50.12470">
    <property type="match status" value="1"/>
</dbReference>
<dbReference type="Gene3D" id="3.40.50.970">
    <property type="match status" value="1"/>
</dbReference>
<dbReference type="Gene3D" id="3.30.559.10">
    <property type="entry name" value="Chloramphenicol acetyltransferase-like domain"/>
    <property type="match status" value="1"/>
</dbReference>
<dbReference type="Gene3D" id="3.40.50.11610">
    <property type="entry name" value="Multifunctional 2-oxoglutarate metabolism enzyme, C-terminal domain"/>
    <property type="match status" value="1"/>
</dbReference>
<dbReference type="Gene3D" id="1.10.287.1150">
    <property type="entry name" value="TPP helical domain"/>
    <property type="match status" value="1"/>
</dbReference>
<dbReference type="InterPro" id="IPR001078">
    <property type="entry name" value="2-oxoacid_DH_actylTfrase"/>
</dbReference>
<dbReference type="InterPro" id="IPR032106">
    <property type="entry name" value="2-oxogl_dehyd_N"/>
</dbReference>
<dbReference type="InterPro" id="IPR011603">
    <property type="entry name" value="2oxoglutarate_DH_E1"/>
</dbReference>
<dbReference type="InterPro" id="IPR023213">
    <property type="entry name" value="CAT-like_dom_sf"/>
</dbReference>
<dbReference type="InterPro" id="IPR001017">
    <property type="entry name" value="DH_E1"/>
</dbReference>
<dbReference type="InterPro" id="IPR042179">
    <property type="entry name" value="KGD_C_sf"/>
</dbReference>
<dbReference type="InterPro" id="IPR031717">
    <property type="entry name" value="ODO-1/KGD_C"/>
</dbReference>
<dbReference type="InterPro" id="IPR029061">
    <property type="entry name" value="THDP-binding"/>
</dbReference>
<dbReference type="InterPro" id="IPR005475">
    <property type="entry name" value="Transketolase-like_Pyr-bd"/>
</dbReference>
<dbReference type="NCBIfam" id="TIGR00239">
    <property type="entry name" value="2oxo_dh_E1"/>
    <property type="match status" value="1"/>
</dbReference>
<dbReference type="NCBIfam" id="NF006914">
    <property type="entry name" value="PRK09404.1"/>
    <property type="match status" value="1"/>
</dbReference>
<dbReference type="NCBIfam" id="NF008907">
    <property type="entry name" value="PRK12270.1"/>
    <property type="match status" value="1"/>
</dbReference>
<dbReference type="PANTHER" id="PTHR23152:SF4">
    <property type="entry name" value="2-OXOADIPATE DEHYDROGENASE COMPLEX COMPONENT E1"/>
    <property type="match status" value="1"/>
</dbReference>
<dbReference type="PANTHER" id="PTHR23152">
    <property type="entry name" value="2-OXOGLUTARATE DEHYDROGENASE"/>
    <property type="match status" value="1"/>
</dbReference>
<dbReference type="Pfam" id="PF00198">
    <property type="entry name" value="2-oxoacid_dh"/>
    <property type="match status" value="1"/>
</dbReference>
<dbReference type="Pfam" id="PF16078">
    <property type="entry name" value="2-oxogl_dehyd_N"/>
    <property type="match status" value="1"/>
</dbReference>
<dbReference type="Pfam" id="PF00676">
    <property type="entry name" value="E1_dh"/>
    <property type="match status" value="1"/>
</dbReference>
<dbReference type="Pfam" id="PF16870">
    <property type="entry name" value="OxoGdeHyase_C"/>
    <property type="match status" value="1"/>
</dbReference>
<dbReference type="Pfam" id="PF02779">
    <property type="entry name" value="Transket_pyr"/>
    <property type="match status" value="1"/>
</dbReference>
<dbReference type="PIRSF" id="PIRSF000157">
    <property type="entry name" value="Oxoglu_dh_E1"/>
    <property type="match status" value="1"/>
</dbReference>
<dbReference type="SMART" id="SM00861">
    <property type="entry name" value="Transket_pyr"/>
    <property type="match status" value="1"/>
</dbReference>
<dbReference type="SUPFAM" id="SSF52777">
    <property type="entry name" value="CoA-dependent acyltransferases"/>
    <property type="match status" value="1"/>
</dbReference>
<dbReference type="SUPFAM" id="SSF52518">
    <property type="entry name" value="Thiamin diphosphate-binding fold (THDP-binding)"/>
    <property type="match status" value="2"/>
</dbReference>
<protein>
    <recommendedName>
        <fullName>Multifunctional 2-oxoglutarate metabolism enzyme</fullName>
    </recommendedName>
    <alternativeName>
        <fullName>2-hydroxy-3-oxoadipate synthase</fullName>
        <shortName>HOA synthase</shortName>
        <shortName>HOAS</shortName>
        <ecNumber>2.2.1.5</ecNumber>
    </alternativeName>
    <alternativeName>
        <fullName>2-oxoglutarate carboxy-lyase</fullName>
    </alternativeName>
    <alternativeName>
        <fullName>2-oxoglutarate decarboxylase</fullName>
    </alternativeName>
    <alternativeName>
        <fullName>Alpha-ketoglutarate decarboxylase</fullName>
        <shortName>KG decarboxylase</shortName>
        <shortName>KGD</shortName>
        <ecNumber>4.1.1.71</ecNumber>
    </alternativeName>
    <alternativeName>
        <fullName>Alpha-ketoglutarate-glyoxylate carboligase</fullName>
    </alternativeName>
    <domain>
        <recommendedName>
            <fullName>2-oxoglutarate dehydrogenase E1 component</fullName>
            <shortName>ODH E1 component</shortName>
            <ecNumber>1.2.4.2</ecNumber>
        </recommendedName>
        <alternativeName>
            <fullName>Alpha-ketoglutarate dehydrogenase E1 component</fullName>
            <shortName>KDH E1 component</shortName>
        </alternativeName>
    </domain>
    <domain>
        <recommendedName>
            <fullName>Dihydrolipoyllysine-residue succinyltransferase component of 2-oxoglutarate dehydrogenase complex</fullName>
            <ecNumber>2.3.1.61</ecNumber>
        </recommendedName>
        <alternativeName>
            <fullName>2-oxoglutarate dehydrogenase complex E2 component</fullName>
            <shortName>ODH E2 component</shortName>
            <shortName>OGDC-E2</shortName>
        </alternativeName>
        <alternativeName>
            <fullName>Dihydrolipoamide succinyltransferase</fullName>
        </alternativeName>
    </domain>
</protein>
<organism>
    <name type="scientific">Mycobacterium tuberculosis (strain CDC 1551 / Oshkosh)</name>
    <dbReference type="NCBI Taxonomy" id="83331"/>
    <lineage>
        <taxon>Bacteria</taxon>
        <taxon>Bacillati</taxon>
        <taxon>Actinomycetota</taxon>
        <taxon>Actinomycetes</taxon>
        <taxon>Mycobacteriales</taxon>
        <taxon>Mycobacteriaceae</taxon>
        <taxon>Mycobacterium</taxon>
        <taxon>Mycobacterium tuberculosis complex</taxon>
    </lineage>
</organism>
<keyword id="KW-0012">Acyltransferase</keyword>
<keyword id="KW-0021">Allosteric enzyme</keyword>
<keyword id="KW-0175">Coiled coil</keyword>
<keyword id="KW-0210">Decarboxylase</keyword>
<keyword id="KW-0456">Lyase</keyword>
<keyword id="KW-0460">Magnesium</keyword>
<keyword id="KW-0479">Metal-binding</keyword>
<keyword id="KW-0511">Multifunctional enzyme</keyword>
<keyword id="KW-0560">Oxidoreductase</keyword>
<keyword id="KW-1185">Reference proteome</keyword>
<keyword id="KW-0786">Thiamine pyrophosphate</keyword>
<keyword id="KW-0808">Transferase</keyword>
<keyword id="KW-0816">Tricarboxylic acid cycle</keyword>